<comment type="function">
    <text evidence="1">Probably modulates the generation of the hypoxia-typic morphotype (called H-MORPH) with altered biofilm architecture that leads to increased host inflammation, rapid disease progression, and mortality in a murine model of invasive aspergillosis.</text>
</comment>
<comment type="subcellular location">
    <subcellularLocation>
        <location evidence="1">Nucleus</location>
    </subcellularLocation>
</comment>
<comment type="domain">
    <text evidence="1">The N-terminal bipartite nuclear localization signalis required for nuclear localization and generation of the H-MORPH morphotype.</text>
</comment>
<comment type="similarity">
    <text evidence="4">Belongs to the hrmA family.</text>
</comment>
<dbReference type="EMBL" id="DS499602">
    <property type="protein sequence ID" value="EDP47807.1"/>
    <property type="molecule type" value="Genomic_DNA"/>
</dbReference>
<dbReference type="EnsemblFungi" id="EDP47807">
    <property type="protein sequence ID" value="EDP47807"/>
    <property type="gene ID" value="AFUB_096600"/>
</dbReference>
<dbReference type="HOGENOM" id="CLU_053540_0_0_1"/>
<dbReference type="OrthoDB" id="48083at5052"/>
<dbReference type="PhylomeDB" id="B0YDS3"/>
<dbReference type="Proteomes" id="UP000001699">
    <property type="component" value="Unassembled WGS sequence"/>
</dbReference>
<dbReference type="GO" id="GO:0005634">
    <property type="term" value="C:nucleus"/>
    <property type="evidence" value="ECO:0007669"/>
    <property type="project" value="UniProtKB-SubCell"/>
</dbReference>
<sequence>MRTKTLQSIQDMVEQLNRRQSMLGDYESTLEERLALVCNPPKRLQRMKIPRRKSEYSSHDRLKRARKIYLEVLENFPLIFVPFILVVPPNACRTWKASEVQRHLKDCEGIHLSYETRANFDGYCRTLRFGLESALTLNLVSCSRPTTITEADDAWAYNAADMDTAVKFFSEAIYKAIESSPKRLREKENQFVKSTQCIQMRFPRHNQQDAIVRLDVGFDSEVVKALFPTAWERLSSVHGFRSSSQSTNRNIEQLEPHLYDNACFTLQGATVSEIPTVLGPHVYRAIKESQLRQWETDNFLLKTTDCVSLDISRRQPYEGTLCLRVGFSLGVFMATQLYSFDR</sequence>
<protein>
    <recommendedName>
        <fullName evidence="3">Hypoxia responsive morphology factor C</fullName>
    </recommendedName>
</protein>
<keyword id="KW-0539">Nucleus</keyword>
<reference key="1">
    <citation type="journal article" date="2008" name="PLoS Genet.">
        <title>Genomic islands in the pathogenic filamentous fungus Aspergillus fumigatus.</title>
        <authorList>
            <person name="Fedorova N.D."/>
            <person name="Khaldi N."/>
            <person name="Joardar V.S."/>
            <person name="Maiti R."/>
            <person name="Amedeo P."/>
            <person name="Anderson M.J."/>
            <person name="Crabtree J."/>
            <person name="Silva J.C."/>
            <person name="Badger J.H."/>
            <person name="Albarraq A."/>
            <person name="Angiuoli S."/>
            <person name="Bussey H."/>
            <person name="Bowyer P."/>
            <person name="Cotty P.J."/>
            <person name="Dyer P.S."/>
            <person name="Egan A."/>
            <person name="Galens K."/>
            <person name="Fraser-Liggett C.M."/>
            <person name="Haas B.J."/>
            <person name="Inman J.M."/>
            <person name="Kent R."/>
            <person name="Lemieux S."/>
            <person name="Malavazi I."/>
            <person name="Orvis J."/>
            <person name="Roemer T."/>
            <person name="Ronning C.M."/>
            <person name="Sundaram J.P."/>
            <person name="Sutton G."/>
            <person name="Turner G."/>
            <person name="Venter J.C."/>
            <person name="White O.R."/>
            <person name="Whitty B.R."/>
            <person name="Youngman P."/>
            <person name="Wolfe K.H."/>
            <person name="Goldman G.H."/>
            <person name="Wortman J.R."/>
            <person name="Jiang B."/>
            <person name="Denning D.W."/>
            <person name="Nierman W.C."/>
        </authorList>
    </citation>
    <scope>NUCLEOTIDE SEQUENCE [LARGE SCALE GENOMIC DNA]</scope>
    <source>
        <strain>CBS 144.89 / FGSC A1163 / CEA10</strain>
    </source>
</reference>
<reference key="2">
    <citation type="journal article" date="2019" name="Nat. Microbiol.">
        <title>Fungal biofilm morphology impacts hypoxia fitness and disease progression.</title>
        <authorList>
            <person name="Kowalski C.H."/>
            <person name="Kerkaert J.D."/>
            <person name="Liu K.W."/>
            <person name="Bond M.C."/>
            <person name="Hartmann R."/>
            <person name="Nadell C.D."/>
            <person name="Stajich J.E."/>
            <person name="Cramer R.A."/>
        </authorList>
    </citation>
    <scope>IDENTIFICATION</scope>
    <scope>FUNCTION</scope>
</reference>
<feature type="chain" id="PRO_0000460414" description="Hypoxia responsive morphology factor C">
    <location>
        <begin position="1"/>
        <end position="342"/>
    </location>
</feature>
<feature type="region of interest" description="RNA recognition motif (RRM)-like domain" evidence="2">
    <location>
        <begin position="151"/>
        <end position="181"/>
    </location>
</feature>
<feature type="short sequence motif" description="Bipartite nuclear localization signal" evidence="2">
    <location>
        <begin position="46"/>
        <end position="68"/>
    </location>
</feature>
<name>HRMC_ASPFC</name>
<gene>
    <name evidence="3" type="primary">hrmC</name>
    <name type="ORF">AFUB_096600</name>
</gene>
<proteinExistence type="inferred from homology"/>
<evidence type="ECO:0000250" key="1">
    <source>
        <dbReference type="UniProtKB" id="B0Y8Y7"/>
    </source>
</evidence>
<evidence type="ECO:0000250" key="2">
    <source>
        <dbReference type="UniProtKB" id="Q4WW97"/>
    </source>
</evidence>
<evidence type="ECO:0000303" key="3">
    <source>
    </source>
</evidence>
<evidence type="ECO:0000305" key="4"/>
<organism>
    <name type="scientific">Aspergillus fumigatus (strain CBS 144.89 / FGSC A1163 / CEA10)</name>
    <name type="common">Neosartorya fumigata</name>
    <dbReference type="NCBI Taxonomy" id="451804"/>
    <lineage>
        <taxon>Eukaryota</taxon>
        <taxon>Fungi</taxon>
        <taxon>Dikarya</taxon>
        <taxon>Ascomycota</taxon>
        <taxon>Pezizomycotina</taxon>
        <taxon>Eurotiomycetes</taxon>
        <taxon>Eurotiomycetidae</taxon>
        <taxon>Eurotiales</taxon>
        <taxon>Aspergillaceae</taxon>
        <taxon>Aspergillus</taxon>
        <taxon>Aspergillus subgen. Fumigati</taxon>
    </lineage>
</organism>
<accession>B0YDS3</accession>